<accession>Q45XH8</accession>
<name>HBG_LOXAF</name>
<gene>
    <name type="primary">HBG</name>
</gene>
<reference key="1">
    <citation type="submission" date="2005-06" db="EMBL/GenBank/DDBJ databases">
        <title>Atypical molecular evolution of afrotherian and xenarthran beta-globin cluster genes.</title>
        <authorList>
            <person name="Sloan A.M."/>
            <person name="Campbell K.L."/>
        </authorList>
    </citation>
    <scope>NUCLEOTIDE SEQUENCE [GENOMIC DNA]</scope>
</reference>
<feature type="chain" id="PRO_0000250467" description="Hemoglobin subunit gamma">
    <location>
        <begin position="1"/>
        <end position="147"/>
    </location>
</feature>
<feature type="domain" description="Globin" evidence="1">
    <location>
        <begin position="3"/>
        <end position="147"/>
    </location>
</feature>
<feature type="binding site" description="distal binding residue" evidence="1">
    <location>
        <position position="64"/>
    </location>
    <ligand>
        <name>heme b</name>
        <dbReference type="ChEBI" id="CHEBI:60344"/>
    </ligand>
    <ligandPart>
        <name>Fe</name>
        <dbReference type="ChEBI" id="CHEBI:18248"/>
    </ligandPart>
</feature>
<feature type="binding site" description="proximal binding residue" evidence="1">
    <location>
        <position position="93"/>
    </location>
    <ligand>
        <name>heme b</name>
        <dbReference type="ChEBI" id="CHEBI:60344"/>
    </ligand>
    <ligandPart>
        <name>Fe</name>
        <dbReference type="ChEBI" id="CHEBI:18248"/>
    </ligandPart>
</feature>
<protein>
    <recommendedName>
        <fullName>Hemoglobin subunit gamma</fullName>
    </recommendedName>
    <alternativeName>
        <fullName>Gamma-globin</fullName>
    </alternativeName>
    <alternativeName>
        <fullName>Hemoglobin gamma chain</fullName>
    </alternativeName>
</protein>
<comment type="function">
    <text>Gamma chains make up the fetal hemoglobin F, in combination with alpha chains.</text>
</comment>
<comment type="subunit">
    <text>Heterotetramer of two alpha chains and two gamma chains in fetal hemoglobin (Hb F).</text>
</comment>
<comment type="tissue specificity">
    <text>Red blood cells.</text>
</comment>
<comment type="similarity">
    <text evidence="1">Belongs to the globin family.</text>
</comment>
<keyword id="KW-0349">Heme</keyword>
<keyword id="KW-0408">Iron</keyword>
<keyword id="KW-0479">Metal-binding</keyword>
<keyword id="KW-0561">Oxygen transport</keyword>
<keyword id="KW-1185">Reference proteome</keyword>
<keyword id="KW-0813">Transport</keyword>
<organism>
    <name type="scientific">Loxodonta africana</name>
    <name type="common">African elephant</name>
    <dbReference type="NCBI Taxonomy" id="9785"/>
    <lineage>
        <taxon>Eukaryota</taxon>
        <taxon>Metazoa</taxon>
        <taxon>Chordata</taxon>
        <taxon>Craniata</taxon>
        <taxon>Vertebrata</taxon>
        <taxon>Euteleostomi</taxon>
        <taxon>Mammalia</taxon>
        <taxon>Eutheria</taxon>
        <taxon>Afrotheria</taxon>
        <taxon>Proboscidea</taxon>
        <taxon>Elephantidae</taxon>
        <taxon>Loxodonta</taxon>
    </lineage>
</organism>
<proteinExistence type="evidence at transcript level"/>
<evidence type="ECO:0000255" key="1">
    <source>
        <dbReference type="PROSITE-ProRule" id="PRU00238"/>
    </source>
</evidence>
<sequence>MVHFTAEEKAAIASLWGQVNVEETGGEALGRLLVVYPWTQRFFDTFGNLSSASAIMGNPRVKAHGKKVLTSFGDAVKNLDNLKGTFAKLSELHCDKLHVDPENFRLLGNVLVIVLANHFGKEFTPQVQAAWQKMVTGVANALAYKYH</sequence>
<dbReference type="EMBL" id="DQ091215">
    <property type="protein sequence ID" value="AAZ22686.1"/>
    <property type="molecule type" value="Genomic_DNA"/>
</dbReference>
<dbReference type="SMR" id="Q45XH8"/>
<dbReference type="FunCoup" id="Q45XH8">
    <property type="interactions" value="9"/>
</dbReference>
<dbReference type="STRING" id="9785.ENSLAFP00000016124"/>
<dbReference type="eggNOG" id="KOG3378">
    <property type="taxonomic scope" value="Eukaryota"/>
</dbReference>
<dbReference type="InParanoid" id="Q45XH8"/>
<dbReference type="Proteomes" id="UP000007646">
    <property type="component" value="Unassembled WGS sequence"/>
</dbReference>
<dbReference type="GO" id="GO:0072562">
    <property type="term" value="C:blood microparticle"/>
    <property type="evidence" value="ECO:0007669"/>
    <property type="project" value="TreeGrafter"/>
</dbReference>
<dbReference type="GO" id="GO:0031838">
    <property type="term" value="C:haptoglobin-hemoglobin complex"/>
    <property type="evidence" value="ECO:0007669"/>
    <property type="project" value="TreeGrafter"/>
</dbReference>
<dbReference type="GO" id="GO:0005833">
    <property type="term" value="C:hemoglobin complex"/>
    <property type="evidence" value="ECO:0007669"/>
    <property type="project" value="InterPro"/>
</dbReference>
<dbReference type="GO" id="GO:0031720">
    <property type="term" value="F:haptoglobin binding"/>
    <property type="evidence" value="ECO:0007669"/>
    <property type="project" value="TreeGrafter"/>
</dbReference>
<dbReference type="GO" id="GO:0020037">
    <property type="term" value="F:heme binding"/>
    <property type="evidence" value="ECO:0007669"/>
    <property type="project" value="InterPro"/>
</dbReference>
<dbReference type="GO" id="GO:0046872">
    <property type="term" value="F:metal ion binding"/>
    <property type="evidence" value="ECO:0007669"/>
    <property type="project" value="UniProtKB-KW"/>
</dbReference>
<dbReference type="GO" id="GO:0043177">
    <property type="term" value="F:organic acid binding"/>
    <property type="evidence" value="ECO:0007669"/>
    <property type="project" value="TreeGrafter"/>
</dbReference>
<dbReference type="GO" id="GO:0019825">
    <property type="term" value="F:oxygen binding"/>
    <property type="evidence" value="ECO:0007669"/>
    <property type="project" value="InterPro"/>
</dbReference>
<dbReference type="GO" id="GO:0005344">
    <property type="term" value="F:oxygen carrier activity"/>
    <property type="evidence" value="ECO:0007669"/>
    <property type="project" value="UniProtKB-KW"/>
</dbReference>
<dbReference type="GO" id="GO:0004601">
    <property type="term" value="F:peroxidase activity"/>
    <property type="evidence" value="ECO:0007669"/>
    <property type="project" value="TreeGrafter"/>
</dbReference>
<dbReference type="GO" id="GO:0042744">
    <property type="term" value="P:hydrogen peroxide catabolic process"/>
    <property type="evidence" value="ECO:0007669"/>
    <property type="project" value="TreeGrafter"/>
</dbReference>
<dbReference type="CDD" id="cd08925">
    <property type="entry name" value="Hb-beta-like"/>
    <property type="match status" value="1"/>
</dbReference>
<dbReference type="FunFam" id="1.10.490.10:FF:000001">
    <property type="entry name" value="Hemoglobin subunit beta"/>
    <property type="match status" value="1"/>
</dbReference>
<dbReference type="Gene3D" id="1.10.490.10">
    <property type="entry name" value="Globins"/>
    <property type="match status" value="1"/>
</dbReference>
<dbReference type="InterPro" id="IPR000971">
    <property type="entry name" value="Globin"/>
</dbReference>
<dbReference type="InterPro" id="IPR009050">
    <property type="entry name" value="Globin-like_sf"/>
</dbReference>
<dbReference type="InterPro" id="IPR012292">
    <property type="entry name" value="Globin/Proto"/>
</dbReference>
<dbReference type="InterPro" id="IPR002337">
    <property type="entry name" value="Hemoglobin_b"/>
</dbReference>
<dbReference type="InterPro" id="IPR050056">
    <property type="entry name" value="Hemoglobin_oxygen_transport"/>
</dbReference>
<dbReference type="PANTHER" id="PTHR11442">
    <property type="entry name" value="HEMOGLOBIN FAMILY MEMBER"/>
    <property type="match status" value="1"/>
</dbReference>
<dbReference type="PANTHER" id="PTHR11442:SF7">
    <property type="entry name" value="HEMOGLOBIN SUBUNIT EPSILON"/>
    <property type="match status" value="1"/>
</dbReference>
<dbReference type="Pfam" id="PF00042">
    <property type="entry name" value="Globin"/>
    <property type="match status" value="1"/>
</dbReference>
<dbReference type="PRINTS" id="PR00814">
    <property type="entry name" value="BETAHAEM"/>
</dbReference>
<dbReference type="SUPFAM" id="SSF46458">
    <property type="entry name" value="Globin-like"/>
    <property type="match status" value="1"/>
</dbReference>
<dbReference type="PROSITE" id="PS01033">
    <property type="entry name" value="GLOBIN"/>
    <property type="match status" value="1"/>
</dbReference>